<organism>
    <name type="scientific">Magnetococcus marinus (strain ATCC BAA-1437 / JCM 17883 / MC-1)</name>
    <dbReference type="NCBI Taxonomy" id="156889"/>
    <lineage>
        <taxon>Bacteria</taxon>
        <taxon>Pseudomonadati</taxon>
        <taxon>Pseudomonadota</taxon>
        <taxon>Alphaproteobacteria</taxon>
        <taxon>Magnetococcales</taxon>
        <taxon>Magnetococcaceae</taxon>
        <taxon>Magnetococcus</taxon>
    </lineage>
</organism>
<gene>
    <name evidence="1" type="primary">aroE</name>
    <name type="ordered locus">Mmc1_0022</name>
</gene>
<protein>
    <recommendedName>
        <fullName evidence="1">Shikimate dehydrogenase (NADP(+))</fullName>
        <shortName evidence="1">SDH</shortName>
        <ecNumber evidence="1">1.1.1.25</ecNumber>
    </recommendedName>
</protein>
<feature type="chain" id="PRO_0000325133" description="Shikimate dehydrogenase (NADP(+))">
    <location>
        <begin position="1"/>
        <end position="286"/>
    </location>
</feature>
<feature type="active site" description="Proton acceptor" evidence="1">
    <location>
        <position position="76"/>
    </location>
</feature>
<feature type="binding site" evidence="1">
    <location>
        <begin position="25"/>
        <end position="27"/>
    </location>
    <ligand>
        <name>shikimate</name>
        <dbReference type="ChEBI" id="CHEBI:36208"/>
    </ligand>
</feature>
<feature type="binding site" evidence="1">
    <location>
        <position position="72"/>
    </location>
    <ligand>
        <name>shikimate</name>
        <dbReference type="ChEBI" id="CHEBI:36208"/>
    </ligand>
</feature>
<feature type="binding site" evidence="1">
    <location>
        <position position="88"/>
    </location>
    <ligand>
        <name>NADP(+)</name>
        <dbReference type="ChEBI" id="CHEBI:58349"/>
    </ligand>
</feature>
<feature type="binding site" evidence="1">
    <location>
        <position position="97"/>
    </location>
    <ligand>
        <name>shikimate</name>
        <dbReference type="ChEBI" id="CHEBI:36208"/>
    </ligand>
</feature>
<feature type="binding site" evidence="1">
    <location>
        <position position="113"/>
    </location>
    <ligand>
        <name>shikimate</name>
        <dbReference type="ChEBI" id="CHEBI:36208"/>
    </ligand>
</feature>
<feature type="binding site" evidence="1">
    <location>
        <begin position="138"/>
        <end position="142"/>
    </location>
    <ligand>
        <name>NADP(+)</name>
        <dbReference type="ChEBI" id="CHEBI:58349"/>
    </ligand>
</feature>
<feature type="binding site" evidence="1">
    <location>
        <begin position="162"/>
        <end position="167"/>
    </location>
    <ligand>
        <name>NADP(+)</name>
        <dbReference type="ChEBI" id="CHEBI:58349"/>
    </ligand>
</feature>
<feature type="binding site" evidence="1">
    <location>
        <position position="232"/>
    </location>
    <ligand>
        <name>NADP(+)</name>
        <dbReference type="ChEBI" id="CHEBI:58349"/>
    </ligand>
</feature>
<feature type="binding site" evidence="1">
    <location>
        <position position="234"/>
    </location>
    <ligand>
        <name>shikimate</name>
        <dbReference type="ChEBI" id="CHEBI:36208"/>
    </ligand>
</feature>
<feature type="binding site" evidence="1">
    <location>
        <position position="255"/>
    </location>
    <ligand>
        <name>NADP(+)</name>
        <dbReference type="ChEBI" id="CHEBI:58349"/>
    </ligand>
</feature>
<sequence length="286" mass="30863">MLSKALNINGETGLLAVIGDPVSHSLSPKMHNLALRHCQLNYCYVALPVKPHNLVRAVQGFAAMGMRGFNATIPHKENLLPLMHTLSEEASHIGAVNTVVIDDDGKMTGHNTDAYGFITGLKEAWRSDLSGLTAIMLGSGGAARAILYGLIQAKAARVIIANRTIERAQALIEAMQPYAPNTQLMVAPTQADQLPLESCDLLINTTSMGLKGETIPYIDLARLPHHAFVSDIVYGAHPTPLLRATAQHQLGGQDGLPMLIHQGAKAFELWTGHSMPVELVEHTLRQ</sequence>
<dbReference type="EC" id="1.1.1.25" evidence="1"/>
<dbReference type="EMBL" id="CP000471">
    <property type="protein sequence ID" value="ABK42551.1"/>
    <property type="molecule type" value="Genomic_DNA"/>
</dbReference>
<dbReference type="SMR" id="A0L3K8"/>
<dbReference type="STRING" id="156889.Mmc1_0022"/>
<dbReference type="KEGG" id="mgm:Mmc1_0022"/>
<dbReference type="eggNOG" id="COG0169">
    <property type="taxonomic scope" value="Bacteria"/>
</dbReference>
<dbReference type="HOGENOM" id="CLU_044063_4_1_5"/>
<dbReference type="UniPathway" id="UPA00053">
    <property type="reaction ID" value="UER00087"/>
</dbReference>
<dbReference type="Proteomes" id="UP000002586">
    <property type="component" value="Chromosome"/>
</dbReference>
<dbReference type="GO" id="GO:0005829">
    <property type="term" value="C:cytosol"/>
    <property type="evidence" value="ECO:0007669"/>
    <property type="project" value="TreeGrafter"/>
</dbReference>
<dbReference type="GO" id="GO:0050661">
    <property type="term" value="F:NADP binding"/>
    <property type="evidence" value="ECO:0007669"/>
    <property type="project" value="InterPro"/>
</dbReference>
<dbReference type="GO" id="GO:0004764">
    <property type="term" value="F:shikimate 3-dehydrogenase (NADP+) activity"/>
    <property type="evidence" value="ECO:0007669"/>
    <property type="project" value="UniProtKB-UniRule"/>
</dbReference>
<dbReference type="GO" id="GO:0008652">
    <property type="term" value="P:amino acid biosynthetic process"/>
    <property type="evidence" value="ECO:0007669"/>
    <property type="project" value="UniProtKB-KW"/>
</dbReference>
<dbReference type="GO" id="GO:0009073">
    <property type="term" value="P:aromatic amino acid family biosynthetic process"/>
    <property type="evidence" value="ECO:0007669"/>
    <property type="project" value="UniProtKB-KW"/>
</dbReference>
<dbReference type="GO" id="GO:0009423">
    <property type="term" value="P:chorismate biosynthetic process"/>
    <property type="evidence" value="ECO:0007669"/>
    <property type="project" value="UniProtKB-UniRule"/>
</dbReference>
<dbReference type="GO" id="GO:0019632">
    <property type="term" value="P:shikimate metabolic process"/>
    <property type="evidence" value="ECO:0007669"/>
    <property type="project" value="InterPro"/>
</dbReference>
<dbReference type="CDD" id="cd01065">
    <property type="entry name" value="NAD_bind_Shikimate_DH"/>
    <property type="match status" value="1"/>
</dbReference>
<dbReference type="Gene3D" id="3.40.50.10860">
    <property type="entry name" value="Leucine Dehydrogenase, chain A, domain 1"/>
    <property type="match status" value="1"/>
</dbReference>
<dbReference type="Gene3D" id="3.40.50.720">
    <property type="entry name" value="NAD(P)-binding Rossmann-like Domain"/>
    <property type="match status" value="1"/>
</dbReference>
<dbReference type="HAMAP" id="MF_00222">
    <property type="entry name" value="Shikimate_DH_AroE"/>
    <property type="match status" value="1"/>
</dbReference>
<dbReference type="InterPro" id="IPR046346">
    <property type="entry name" value="Aminoacid_DH-like_N_sf"/>
</dbReference>
<dbReference type="InterPro" id="IPR036291">
    <property type="entry name" value="NAD(P)-bd_dom_sf"/>
</dbReference>
<dbReference type="InterPro" id="IPR041121">
    <property type="entry name" value="SDH_C"/>
</dbReference>
<dbReference type="InterPro" id="IPR011342">
    <property type="entry name" value="Shikimate_DH"/>
</dbReference>
<dbReference type="InterPro" id="IPR013708">
    <property type="entry name" value="Shikimate_DH-bd_N"/>
</dbReference>
<dbReference type="InterPro" id="IPR022893">
    <property type="entry name" value="Shikimate_DH_fam"/>
</dbReference>
<dbReference type="InterPro" id="IPR006151">
    <property type="entry name" value="Shikm_DH/Glu-tRNA_Rdtase"/>
</dbReference>
<dbReference type="NCBIfam" id="TIGR00507">
    <property type="entry name" value="aroE"/>
    <property type="match status" value="1"/>
</dbReference>
<dbReference type="NCBIfam" id="NF001314">
    <property type="entry name" value="PRK00258.2-2"/>
    <property type="match status" value="1"/>
</dbReference>
<dbReference type="PANTHER" id="PTHR21089:SF1">
    <property type="entry name" value="BIFUNCTIONAL 3-DEHYDROQUINATE DEHYDRATASE_SHIKIMATE DEHYDROGENASE, CHLOROPLASTIC"/>
    <property type="match status" value="1"/>
</dbReference>
<dbReference type="PANTHER" id="PTHR21089">
    <property type="entry name" value="SHIKIMATE DEHYDROGENASE"/>
    <property type="match status" value="1"/>
</dbReference>
<dbReference type="Pfam" id="PF18317">
    <property type="entry name" value="SDH_C"/>
    <property type="match status" value="1"/>
</dbReference>
<dbReference type="Pfam" id="PF01488">
    <property type="entry name" value="Shikimate_DH"/>
    <property type="match status" value="1"/>
</dbReference>
<dbReference type="Pfam" id="PF08501">
    <property type="entry name" value="Shikimate_dh_N"/>
    <property type="match status" value="1"/>
</dbReference>
<dbReference type="SUPFAM" id="SSF53223">
    <property type="entry name" value="Aminoacid dehydrogenase-like, N-terminal domain"/>
    <property type="match status" value="1"/>
</dbReference>
<dbReference type="SUPFAM" id="SSF51735">
    <property type="entry name" value="NAD(P)-binding Rossmann-fold domains"/>
    <property type="match status" value="1"/>
</dbReference>
<comment type="function">
    <text evidence="1">Involved in the biosynthesis of the chorismate, which leads to the biosynthesis of aromatic amino acids. Catalyzes the reversible NADPH linked reduction of 3-dehydroshikimate (DHSA) to yield shikimate (SA).</text>
</comment>
<comment type="catalytic activity">
    <reaction evidence="1">
        <text>shikimate + NADP(+) = 3-dehydroshikimate + NADPH + H(+)</text>
        <dbReference type="Rhea" id="RHEA:17737"/>
        <dbReference type="ChEBI" id="CHEBI:15378"/>
        <dbReference type="ChEBI" id="CHEBI:16630"/>
        <dbReference type="ChEBI" id="CHEBI:36208"/>
        <dbReference type="ChEBI" id="CHEBI:57783"/>
        <dbReference type="ChEBI" id="CHEBI:58349"/>
        <dbReference type="EC" id="1.1.1.25"/>
    </reaction>
</comment>
<comment type="pathway">
    <text evidence="1">Metabolic intermediate biosynthesis; chorismate biosynthesis; chorismate from D-erythrose 4-phosphate and phosphoenolpyruvate: step 4/7.</text>
</comment>
<comment type="subunit">
    <text evidence="1">Homodimer.</text>
</comment>
<comment type="similarity">
    <text evidence="1">Belongs to the shikimate dehydrogenase family.</text>
</comment>
<accession>A0L3K8</accession>
<reference key="1">
    <citation type="journal article" date="2009" name="Appl. Environ. Microbiol.">
        <title>Complete genome sequence of the chemolithoautotrophic marine magnetotactic coccus strain MC-1.</title>
        <authorList>
            <person name="Schubbe S."/>
            <person name="Williams T.J."/>
            <person name="Xie G."/>
            <person name="Kiss H.E."/>
            <person name="Brettin T.S."/>
            <person name="Martinez D."/>
            <person name="Ross C.A."/>
            <person name="Schuler D."/>
            <person name="Cox B.L."/>
            <person name="Nealson K.H."/>
            <person name="Bazylinski D.A."/>
        </authorList>
    </citation>
    <scope>NUCLEOTIDE SEQUENCE [LARGE SCALE GENOMIC DNA]</scope>
    <source>
        <strain>ATCC BAA-1437 / JCM 17883 / MC-1</strain>
    </source>
</reference>
<proteinExistence type="inferred from homology"/>
<evidence type="ECO:0000255" key="1">
    <source>
        <dbReference type="HAMAP-Rule" id="MF_00222"/>
    </source>
</evidence>
<keyword id="KW-0028">Amino-acid biosynthesis</keyword>
<keyword id="KW-0057">Aromatic amino acid biosynthesis</keyword>
<keyword id="KW-0521">NADP</keyword>
<keyword id="KW-0560">Oxidoreductase</keyword>
<keyword id="KW-1185">Reference proteome</keyword>
<name>AROE_MAGMM</name>